<comment type="function">
    <text evidence="2">Tubulin is the major constituent of microtubules, protein filaments consisting of alpha- and beta-tubulin heterodimers (By similarity). Gamma-tubulin is a key component of the gamma-tubulin ring complex (gTuRC) which mediates microtubule nucleation (By similarity). The gTuRC regulates the minus-end nucleation of alpha-beta tubulin heterodimers that grow into microtubule protafilaments, a critical step in centrosome duplication and spindle formation (By similarity).</text>
</comment>
<comment type="subunit">
    <text evidence="2 3 4">Component of the gamma-tubulin ring complex (gTuRC) consisting of TUBGCP2, TUBGCP3, TUBGCP4, TUBGCP5 and TUBGCP6 and gamma-tubulin TUBG1 or TUBG2 (By similarity). TUBGCP2, TUBGCP3, TUBGCP4, TUBGCP5 and TUBGCP6 assemble in a 5:5:2:1:1 stoichiometry; each is associated with a gamma-tubulin, thereby arranging 14 gamma-tubulins in a helical manner (By similarity). Gamma-tubulin at the first position is blocked by TUBGCP3 at the last position, allowing 13 protafilaments to grow into a microtubule (By similarity). The gTuRC (via TUBGCP3 and TUBGCP6) interacts with ACTB and MZT1; the interactions form a luminal bridge that stabilizes the initial structure during complex assembly (By similarity). The gTuRC (via TUBGCP2) interacts with MZT2A/MZT2B and CDK5RAP2 (via CM1 motif); the interactions play a role in gTuRC activation (By similarity). Interacts with alpha-beta tubulin heterodimers; the interaction allows microtubules to nucleate from the gTuRC (By similarity). Interacts with B9D2 (By similarity). Interacts with CDK5RAP2; the interaction is leading to centrosomal localization of TUBG1 and CDK5RAP2 (By similarity). Interacts with CIMAP3 (By similarity). Interacts with SAS6 and NUP62 at the centrosome (By similarity). Interacts with EML3 (phosphorylated at 'Thr-881') and HAUS8 (By similarity). Interacts with DNM2; this interaction may participate in centrosome cohesion (By similarity). Interacts with CCDC66 (By similarity).</text>
</comment>
<comment type="subcellular location">
    <subcellularLocation>
        <location evidence="2">Cytoplasm</location>
        <location evidence="2">Cytoskeleton</location>
        <location evidence="2">Microtubule organizing center</location>
        <location evidence="2">Centrosome</location>
    </subcellularLocation>
    <subcellularLocation>
        <location evidence="2">Cytoplasm</location>
        <location evidence="2">Cytoskeleton</location>
        <location evidence="2">Spindle</location>
    </subcellularLocation>
    <text evidence="2">Localizes to mitotic spindle microtubules.</text>
</comment>
<comment type="PTM">
    <text evidence="1">Phosphorylation at Ser-131 by BRSK1 regulates centrosome duplication, possibly by mediating relocation of gamma-tubulin and its associated proteins from the cytoplasm to the centrosome.</text>
</comment>
<comment type="similarity">
    <text evidence="6">Belongs to the tubulin family.</text>
</comment>
<organism>
    <name type="scientific">Canis lupus familiaris</name>
    <name type="common">Dog</name>
    <name type="synonym">Canis familiaris</name>
    <dbReference type="NCBI Taxonomy" id="9615"/>
    <lineage>
        <taxon>Eukaryota</taxon>
        <taxon>Metazoa</taxon>
        <taxon>Chordata</taxon>
        <taxon>Craniata</taxon>
        <taxon>Vertebrata</taxon>
        <taxon>Euteleostomi</taxon>
        <taxon>Mammalia</taxon>
        <taxon>Eutheria</taxon>
        <taxon>Laurasiatheria</taxon>
        <taxon>Carnivora</taxon>
        <taxon>Caniformia</taxon>
        <taxon>Canidae</taxon>
        <taxon>Canis</taxon>
    </lineage>
</organism>
<sequence>MPREIITLQLGQCGNQIGFEFWKQLCAEHGISPEGIVEEFATEGTDRKDVFFYQADDEHYIPRAVLLDLEPRVIHSILNSPYAKLYNPENIYLSEHGGGAGNNWASGFSQGEKIHEDIFDIIDREADGSDSLEGFVLCHSIAGGTGSGLGSYLLERLNDRYPKKLVQTYSVFPNQDEMSDVVVQPYNSLLTLKRLTQNADCVVVLDNTTLNRIATNRLHIQNPSFFQINQLVSTIMSASTTTLRYPGYMNNDLIGLIASLIPTPRLHFLMTGYTPLTTDQSVASVRKTTVLDVMRRLLQPKNVMVSTGRDRQTNHCYIAILNIIQGEVDPTQVHKSLQRIRERKLANFIPWGPASIQVALSRKSPYLPSAHRVSGLMMANHTSISSLFERTCRQYDKLRKREAFLEQFRKEDIFKENFDELDTSREVVHQLIDEYHAATRPDYISWGAQEQ</sequence>
<dbReference type="EMBL" id="AF212974">
    <property type="protein sequence ID" value="AAG43544.1"/>
    <property type="molecule type" value="mRNA"/>
</dbReference>
<dbReference type="RefSeq" id="NP_001003105.1">
    <property type="nucleotide sequence ID" value="NM_001003105.1"/>
</dbReference>
<dbReference type="SMR" id="Q9GKK5"/>
<dbReference type="DIP" id="DIP-29733N"/>
<dbReference type="FunCoup" id="Q9GKK5">
    <property type="interactions" value="3115"/>
</dbReference>
<dbReference type="IntAct" id="Q9GKK5">
    <property type="interactions" value="1"/>
</dbReference>
<dbReference type="STRING" id="9615.ENSCAFP00000021979"/>
<dbReference type="PaxDb" id="9612-ENSCAFP00000021961"/>
<dbReference type="GeneID" id="403695"/>
<dbReference type="KEGG" id="cfa:403695"/>
<dbReference type="CTD" id="7283"/>
<dbReference type="eggNOG" id="KOG1374">
    <property type="taxonomic scope" value="Eukaryota"/>
</dbReference>
<dbReference type="InParanoid" id="Q9GKK5"/>
<dbReference type="OrthoDB" id="10249382at2759"/>
<dbReference type="Proteomes" id="UP000002254">
    <property type="component" value="Unplaced"/>
</dbReference>
<dbReference type="Proteomes" id="UP000694429">
    <property type="component" value="Unplaced"/>
</dbReference>
<dbReference type="Proteomes" id="UP000694542">
    <property type="component" value="Unplaced"/>
</dbReference>
<dbReference type="Proteomes" id="UP000805418">
    <property type="component" value="Unplaced"/>
</dbReference>
<dbReference type="GO" id="GO:0005813">
    <property type="term" value="C:centrosome"/>
    <property type="evidence" value="ECO:0000250"/>
    <property type="project" value="UniProtKB"/>
</dbReference>
<dbReference type="GO" id="GO:0005737">
    <property type="term" value="C:cytoplasm"/>
    <property type="evidence" value="ECO:0000250"/>
    <property type="project" value="UniProtKB"/>
</dbReference>
<dbReference type="GO" id="GO:0000931">
    <property type="term" value="C:gamma-tubulin ring complex"/>
    <property type="evidence" value="ECO:0000318"/>
    <property type="project" value="GO_Central"/>
</dbReference>
<dbReference type="GO" id="GO:1990498">
    <property type="term" value="C:mitotic spindle microtubule"/>
    <property type="evidence" value="ECO:0000250"/>
    <property type="project" value="UniProtKB"/>
</dbReference>
<dbReference type="GO" id="GO:0005634">
    <property type="term" value="C:nucleus"/>
    <property type="evidence" value="ECO:0000318"/>
    <property type="project" value="GO_Central"/>
</dbReference>
<dbReference type="GO" id="GO:0005827">
    <property type="term" value="C:polar microtubule"/>
    <property type="evidence" value="ECO:0000250"/>
    <property type="project" value="UniProtKB"/>
</dbReference>
<dbReference type="GO" id="GO:0005819">
    <property type="term" value="C:spindle"/>
    <property type="evidence" value="ECO:0000318"/>
    <property type="project" value="GO_Central"/>
</dbReference>
<dbReference type="GO" id="GO:0005525">
    <property type="term" value="F:GTP binding"/>
    <property type="evidence" value="ECO:0000318"/>
    <property type="project" value="GO_Central"/>
</dbReference>
<dbReference type="GO" id="GO:0140490">
    <property type="term" value="F:microtubule nucleator activity"/>
    <property type="evidence" value="ECO:0000318"/>
    <property type="project" value="GO_Central"/>
</dbReference>
<dbReference type="GO" id="GO:0031122">
    <property type="term" value="P:cytoplasmic microtubule organization"/>
    <property type="evidence" value="ECO:0007669"/>
    <property type="project" value="InterPro"/>
</dbReference>
<dbReference type="GO" id="GO:0000212">
    <property type="term" value="P:meiotic spindle organization"/>
    <property type="evidence" value="ECO:0000318"/>
    <property type="project" value="GO_Central"/>
</dbReference>
<dbReference type="GO" id="GO:0007020">
    <property type="term" value="P:microtubule nucleation"/>
    <property type="evidence" value="ECO:0000318"/>
    <property type="project" value="GO_Central"/>
</dbReference>
<dbReference type="GO" id="GO:0000278">
    <property type="term" value="P:mitotic cell cycle"/>
    <property type="evidence" value="ECO:0000318"/>
    <property type="project" value="GO_Central"/>
</dbReference>
<dbReference type="GO" id="GO:0000070">
    <property type="term" value="P:mitotic sister chromatid segregation"/>
    <property type="evidence" value="ECO:0000318"/>
    <property type="project" value="GO_Central"/>
</dbReference>
<dbReference type="GO" id="GO:0007052">
    <property type="term" value="P:mitotic spindle organization"/>
    <property type="evidence" value="ECO:0000318"/>
    <property type="project" value="GO_Central"/>
</dbReference>
<dbReference type="CDD" id="cd02188">
    <property type="entry name" value="gamma_tubulin"/>
    <property type="match status" value="1"/>
</dbReference>
<dbReference type="FunFam" id="1.10.287.600:FF:000004">
    <property type="entry name" value="Tubulin gamma chain"/>
    <property type="match status" value="1"/>
</dbReference>
<dbReference type="FunFam" id="3.30.1330.20:FF:000003">
    <property type="entry name" value="Tubulin gamma chain"/>
    <property type="match status" value="1"/>
</dbReference>
<dbReference type="FunFam" id="3.40.50.1440:FF:000010">
    <property type="entry name" value="Tubulin gamma chain"/>
    <property type="match status" value="1"/>
</dbReference>
<dbReference type="Gene3D" id="1.10.287.600">
    <property type="entry name" value="Helix hairpin bin"/>
    <property type="match status" value="1"/>
</dbReference>
<dbReference type="Gene3D" id="3.30.1330.20">
    <property type="entry name" value="Tubulin/FtsZ, C-terminal domain"/>
    <property type="match status" value="1"/>
</dbReference>
<dbReference type="Gene3D" id="3.40.50.1440">
    <property type="entry name" value="Tubulin/FtsZ, GTPase domain"/>
    <property type="match status" value="1"/>
</dbReference>
<dbReference type="InterPro" id="IPR002454">
    <property type="entry name" value="Gamma_tubulin"/>
</dbReference>
<dbReference type="InterPro" id="IPR008280">
    <property type="entry name" value="Tub_FtsZ_C"/>
</dbReference>
<dbReference type="InterPro" id="IPR000217">
    <property type="entry name" value="Tubulin"/>
</dbReference>
<dbReference type="InterPro" id="IPR037103">
    <property type="entry name" value="Tubulin/FtsZ-like_C"/>
</dbReference>
<dbReference type="InterPro" id="IPR018316">
    <property type="entry name" value="Tubulin/FtsZ_2-layer-sand-dom"/>
</dbReference>
<dbReference type="InterPro" id="IPR036525">
    <property type="entry name" value="Tubulin/FtsZ_GTPase_sf"/>
</dbReference>
<dbReference type="InterPro" id="IPR023123">
    <property type="entry name" value="Tubulin_C"/>
</dbReference>
<dbReference type="InterPro" id="IPR017975">
    <property type="entry name" value="Tubulin_CS"/>
</dbReference>
<dbReference type="InterPro" id="IPR003008">
    <property type="entry name" value="Tubulin_FtsZ_GTPase"/>
</dbReference>
<dbReference type="PANTHER" id="PTHR11588">
    <property type="entry name" value="TUBULIN"/>
    <property type="match status" value="1"/>
</dbReference>
<dbReference type="Pfam" id="PF00091">
    <property type="entry name" value="Tubulin"/>
    <property type="match status" value="1"/>
</dbReference>
<dbReference type="Pfam" id="PF03953">
    <property type="entry name" value="Tubulin_C"/>
    <property type="match status" value="1"/>
</dbReference>
<dbReference type="PRINTS" id="PR01164">
    <property type="entry name" value="GAMMATUBULIN"/>
</dbReference>
<dbReference type="PRINTS" id="PR01161">
    <property type="entry name" value="TUBULIN"/>
</dbReference>
<dbReference type="SMART" id="SM00864">
    <property type="entry name" value="Tubulin"/>
    <property type="match status" value="1"/>
</dbReference>
<dbReference type="SMART" id="SM00865">
    <property type="entry name" value="Tubulin_C"/>
    <property type="match status" value="1"/>
</dbReference>
<dbReference type="SUPFAM" id="SSF55307">
    <property type="entry name" value="Tubulin C-terminal domain-like"/>
    <property type="match status" value="1"/>
</dbReference>
<dbReference type="SUPFAM" id="SSF52490">
    <property type="entry name" value="Tubulin nucleotide-binding domain-like"/>
    <property type="match status" value="1"/>
</dbReference>
<dbReference type="PROSITE" id="PS00227">
    <property type="entry name" value="TUBULIN"/>
    <property type="match status" value="1"/>
</dbReference>
<feature type="chain" id="PRO_0000048464" description="Tubulin gamma-1 chain">
    <location>
        <begin position="1"/>
        <end position="451"/>
    </location>
</feature>
<feature type="binding site" evidence="5">
    <location>
        <begin position="142"/>
        <end position="148"/>
    </location>
    <ligand>
        <name>GTP</name>
        <dbReference type="ChEBI" id="CHEBI:37565"/>
    </ligand>
</feature>
<feature type="modified residue" description="Phosphoserine; by BRSK1" evidence="3">
    <location>
        <position position="131"/>
    </location>
</feature>
<evidence type="ECO:0000250" key="1"/>
<evidence type="ECO:0000250" key="2">
    <source>
        <dbReference type="UniProtKB" id="P23258"/>
    </source>
</evidence>
<evidence type="ECO:0000250" key="3">
    <source>
        <dbReference type="UniProtKB" id="P83887"/>
    </source>
</evidence>
<evidence type="ECO:0000250" key="4">
    <source>
        <dbReference type="UniProtKB" id="P83888"/>
    </source>
</evidence>
<evidence type="ECO:0000255" key="5"/>
<evidence type="ECO:0000305" key="6"/>
<name>TBG1_CANLF</name>
<accession>Q9GKK5</accession>
<reference key="1">
    <citation type="journal article" date="2001" name="Anim. Genet.">
        <title>Cloning of canine gamma-tubulin (TUBG1) cDNA and mapping to CFA9.</title>
        <authorList>
            <person name="Sidjanin D.J."/>
            <person name="Xue F."/>
            <person name="McElwee J."/>
            <person name="Johnson J.L."/>
            <person name="Holmgren C."/>
            <person name="Mellersh C."/>
            <person name="Ostrander E.A."/>
            <person name="Acland G.M."/>
            <person name="Aguirre G.D."/>
        </authorList>
    </citation>
    <scope>NUCLEOTIDE SEQUENCE [MRNA]</scope>
</reference>
<proteinExistence type="evidence at transcript level"/>
<protein>
    <recommendedName>
        <fullName evidence="2">Tubulin gamma-1 chain</fullName>
    </recommendedName>
    <alternativeName>
        <fullName>Gamma-1-tubulin</fullName>
    </alternativeName>
    <alternativeName>
        <fullName>Gamma-tubulin complex component 1</fullName>
        <shortName>GCP-1</shortName>
    </alternativeName>
</protein>
<gene>
    <name evidence="2" type="primary">TUBG1</name>
    <name type="synonym">TUBG</name>
</gene>
<keyword id="KW-0963">Cytoplasm</keyword>
<keyword id="KW-0206">Cytoskeleton</keyword>
<keyword id="KW-0342">GTP-binding</keyword>
<keyword id="KW-0493">Microtubule</keyword>
<keyword id="KW-0547">Nucleotide-binding</keyword>
<keyword id="KW-0597">Phosphoprotein</keyword>
<keyword id="KW-1185">Reference proteome</keyword>